<proteinExistence type="evidence at protein level"/>
<gene>
    <name type="primary">TOPAZ1</name>
    <name type="synonym">C3orf77</name>
</gene>
<protein>
    <recommendedName>
        <fullName evidence="1">Protein TOPAZ1</fullName>
    </recommendedName>
    <alternativeName>
        <fullName evidence="1">Testis- and ovary-specific PAZ domain-containing protein 1</fullName>
    </alternativeName>
</protein>
<accession>Q8N9V7</accession>
<sequence length="1692" mass="190927">MRRPPPLGPTTASGPEGNVRNLQKRQAPGPGAAGGCGPEAGGCRENKQKRRMVARATPGRGEVESDKSVAASGAGKAARRQVEGRRGPVSPSDSSDPRGLEAAKEAELPLQTERHTKEKRKVTEASSDDPQPGLDLVRKESLTSSESFQTVECLQSLGKESIIEGIKRRIRNKKLKSLENPPLKITENEATQNIKVEFQDELYKNTPKYSCNILSPEVENNSVLKLRDCNCFPHSKGCNDENNLPYKPDGGCMHVAENFSKKENLRSLAEKSDTNSIPQLLQTEENVMGVNKLLPEESDLYQSKTNGLLSCLQHEKNKYSIEESSVGRKPRKRMKLSEKADETVTEMNFSNEYNKSELMLQENQMIADGKEAETKSPLNVLRKVSHNTVSLMDHLLSVPETVEKETSSEHHVNAVFQKTIEPLLKEETENASEPLGYESMASKEDFKSMKSFIGKSPNEYHIERRSSREDLRSASEELKLSCQRTIPMTGKRTWPYYSCARISAWCWKKASLPESSYFLRGSQESCRQVDVPKHQTNQTHLTDSKLLLQSSLTETNTESSSKEKLDSNSNCLSSVSAVEPTLMVIKEPIIKDDKKIKSEELSRRGSEVISNTTEDTQLTSETQSLTGNKKKARGNLTKLNLTATSKDGQEANNSAGKTIHRKACIAQQTFIVPDLVKILNTGRLTNFKIPLLKNKSEKRKEVNAKSSEREAYSPLELLDNLSGADVRQNRSKENVSMMMLGPQTLSIRNSVTPVQASSDSFYNKKSYSISPSFTKQGNNSKPSNHVSEPGNIVSNKEVASLTVENNAFSCDPGYVEKSPSFCCNEQETFRPVSSEVRGRKITKNFSEVGFPDILKAYEDDVLLIDVIQDDPDLFGVSNEGELSFTSEVPKISQEPNVAGEHQSTDSKYMETPVKKEPSDDLRELPVLDCGWIKPDICASNSAESEIKRDPKDVNTSLGEVANETSENETLGDFSEQIKGSDLDEKHRFTDKVITKEEKENIYEVCKSKDSRNADFMVGECQFAVPVPKPLCLLVPPLNLSGRQEDTILNTWMNDFRFLGKHSVLKLQNPETCEIFKREKNVGVFQKSLGLMIPYKYCKFHFNTLRGCERPLCKFAHVPEQGDEKVCMDVFKKYININELCLLQRAVNIFMEYYRKFPPGVYFDLQVLNDLLNSLLKHCLLKEVFQIVNLSIMVKMLPSLKILLNIFEYVATMKLRNAVPALIDIFCKLVEAGMVLDPEHFNYIVKLLYQVQASKQEITAVLEMKSRLQMRRFKKNWKCDLDSALNKLEHCKEKGDWTKLGKLYINVKMGCEKFADFQTFCACIAETLTKNYEDERPDIPFCEFAETVSKDPQNSKVDKGVLGRIGISAMYFYHKLLQWSKGRKVLEKLYELKIHFTSLKGLIGPEKLASRCQIVNVAAEIFLKSGSLDGAIWVMRESEWIINTPLWPCDRLDVLNRHNLLCTIAHEILAKSLYRQTFEVLQNLPGFQNSQETVEVSQYSLLFNKLLGSCIESSSLGMSSSVAEFMISKSIPIDFSFLRRLITSLGRSRLWLKARAHYKSALSLGCYPPLEGNLYRKLLLIPSYLSEIEMLLAIEIFMVSNASSIQSPGTSTQILQIVLKRCEDNQSRSNDDYQAAVERLIMAARISDPKLFVKHMTVNVNKEQVYSLEHCSALKWLKENMKWAGKVWLFSNH</sequence>
<evidence type="ECO:0000250" key="1">
    <source>
        <dbReference type="UniProtKB" id="E5FYH1"/>
    </source>
</evidence>
<evidence type="ECO:0000256" key="2">
    <source>
        <dbReference type="SAM" id="MobiDB-lite"/>
    </source>
</evidence>
<evidence type="ECO:0000269" key="3">
    <source>
    </source>
</evidence>
<evidence type="ECO:0000305" key="4"/>
<keyword id="KW-0963">Cytoplasm</keyword>
<keyword id="KW-0221">Differentiation</keyword>
<keyword id="KW-1267">Proteomics identification</keyword>
<keyword id="KW-1185">Reference proteome</keyword>
<keyword id="KW-0744">Spermatogenesis</keyword>
<organism>
    <name type="scientific">Homo sapiens</name>
    <name type="common">Human</name>
    <dbReference type="NCBI Taxonomy" id="9606"/>
    <lineage>
        <taxon>Eukaryota</taxon>
        <taxon>Metazoa</taxon>
        <taxon>Chordata</taxon>
        <taxon>Craniata</taxon>
        <taxon>Vertebrata</taxon>
        <taxon>Euteleostomi</taxon>
        <taxon>Mammalia</taxon>
        <taxon>Eutheria</taxon>
        <taxon>Euarchontoglires</taxon>
        <taxon>Primates</taxon>
        <taxon>Haplorrhini</taxon>
        <taxon>Catarrhini</taxon>
        <taxon>Hominidae</taxon>
        <taxon>Homo</taxon>
    </lineage>
</organism>
<reference key="1">
    <citation type="journal article" date="2006" name="Nature">
        <title>The DNA sequence, annotation and analysis of human chromosome 3.</title>
        <authorList>
            <person name="Muzny D.M."/>
            <person name="Scherer S.E."/>
            <person name="Kaul R."/>
            <person name="Wang J."/>
            <person name="Yu J."/>
            <person name="Sudbrak R."/>
            <person name="Buhay C.J."/>
            <person name="Chen R."/>
            <person name="Cree A."/>
            <person name="Ding Y."/>
            <person name="Dugan-Rocha S."/>
            <person name="Gill R."/>
            <person name="Gunaratne P."/>
            <person name="Harris R.A."/>
            <person name="Hawes A.C."/>
            <person name="Hernandez J."/>
            <person name="Hodgson A.V."/>
            <person name="Hume J."/>
            <person name="Jackson A."/>
            <person name="Khan Z.M."/>
            <person name="Kovar-Smith C."/>
            <person name="Lewis L.R."/>
            <person name="Lozado R.J."/>
            <person name="Metzker M.L."/>
            <person name="Milosavljevic A."/>
            <person name="Miner G.R."/>
            <person name="Morgan M.B."/>
            <person name="Nazareth L.V."/>
            <person name="Scott G."/>
            <person name="Sodergren E."/>
            <person name="Song X.-Z."/>
            <person name="Steffen D."/>
            <person name="Wei S."/>
            <person name="Wheeler D.A."/>
            <person name="Wright M.W."/>
            <person name="Worley K.C."/>
            <person name="Yuan Y."/>
            <person name="Zhang Z."/>
            <person name="Adams C.Q."/>
            <person name="Ansari-Lari M.A."/>
            <person name="Ayele M."/>
            <person name="Brown M.J."/>
            <person name="Chen G."/>
            <person name="Chen Z."/>
            <person name="Clendenning J."/>
            <person name="Clerc-Blankenburg K.P."/>
            <person name="Chen R."/>
            <person name="Chen Z."/>
            <person name="Davis C."/>
            <person name="Delgado O."/>
            <person name="Dinh H.H."/>
            <person name="Dong W."/>
            <person name="Draper H."/>
            <person name="Ernst S."/>
            <person name="Fu G."/>
            <person name="Gonzalez-Garay M.L."/>
            <person name="Garcia D.K."/>
            <person name="Gillett W."/>
            <person name="Gu J."/>
            <person name="Hao B."/>
            <person name="Haugen E."/>
            <person name="Havlak P."/>
            <person name="He X."/>
            <person name="Hennig S."/>
            <person name="Hu S."/>
            <person name="Huang W."/>
            <person name="Jackson L.R."/>
            <person name="Jacob L.S."/>
            <person name="Kelly S.H."/>
            <person name="Kube M."/>
            <person name="Levy R."/>
            <person name="Li Z."/>
            <person name="Liu B."/>
            <person name="Liu J."/>
            <person name="Liu W."/>
            <person name="Lu J."/>
            <person name="Maheshwari M."/>
            <person name="Nguyen B.-V."/>
            <person name="Okwuonu G.O."/>
            <person name="Palmeiri A."/>
            <person name="Pasternak S."/>
            <person name="Perez L.M."/>
            <person name="Phelps K.A."/>
            <person name="Plopper F.J."/>
            <person name="Qiang B."/>
            <person name="Raymond C."/>
            <person name="Rodriguez R."/>
            <person name="Saenphimmachak C."/>
            <person name="Santibanez J."/>
            <person name="Shen H."/>
            <person name="Shen Y."/>
            <person name="Subramanian S."/>
            <person name="Tabor P.E."/>
            <person name="Verduzco D."/>
            <person name="Waldron L."/>
            <person name="Wang J."/>
            <person name="Wang J."/>
            <person name="Wang Q."/>
            <person name="Williams G.A."/>
            <person name="Wong G.K.-S."/>
            <person name="Yao Z."/>
            <person name="Zhang J."/>
            <person name="Zhang X."/>
            <person name="Zhao G."/>
            <person name="Zhou J."/>
            <person name="Zhou Y."/>
            <person name="Nelson D."/>
            <person name="Lehrach H."/>
            <person name="Reinhardt R."/>
            <person name="Naylor S.L."/>
            <person name="Yang H."/>
            <person name="Olson M."/>
            <person name="Weinstock G."/>
            <person name="Gibbs R.A."/>
        </authorList>
    </citation>
    <scope>NUCLEOTIDE SEQUENCE [LARGE SCALE GENOMIC DNA]</scope>
</reference>
<reference key="2">
    <citation type="journal article" date="2004" name="Nat. Genet.">
        <title>Complete sequencing and characterization of 21,243 full-length human cDNAs.</title>
        <authorList>
            <person name="Ota T."/>
            <person name="Suzuki Y."/>
            <person name="Nishikawa T."/>
            <person name="Otsuki T."/>
            <person name="Sugiyama T."/>
            <person name="Irie R."/>
            <person name="Wakamatsu A."/>
            <person name="Hayashi K."/>
            <person name="Sato H."/>
            <person name="Nagai K."/>
            <person name="Kimura K."/>
            <person name="Makita H."/>
            <person name="Sekine M."/>
            <person name="Obayashi M."/>
            <person name="Nishi T."/>
            <person name="Shibahara T."/>
            <person name="Tanaka T."/>
            <person name="Ishii S."/>
            <person name="Yamamoto J."/>
            <person name="Saito K."/>
            <person name="Kawai Y."/>
            <person name="Isono Y."/>
            <person name="Nakamura Y."/>
            <person name="Nagahari K."/>
            <person name="Murakami K."/>
            <person name="Yasuda T."/>
            <person name="Iwayanagi T."/>
            <person name="Wagatsuma M."/>
            <person name="Shiratori A."/>
            <person name="Sudo H."/>
            <person name="Hosoiri T."/>
            <person name="Kaku Y."/>
            <person name="Kodaira H."/>
            <person name="Kondo H."/>
            <person name="Sugawara M."/>
            <person name="Takahashi M."/>
            <person name="Kanda K."/>
            <person name="Yokoi T."/>
            <person name="Furuya T."/>
            <person name="Kikkawa E."/>
            <person name="Omura Y."/>
            <person name="Abe K."/>
            <person name="Kamihara K."/>
            <person name="Katsuta N."/>
            <person name="Sato K."/>
            <person name="Tanikawa M."/>
            <person name="Yamazaki M."/>
            <person name="Ninomiya K."/>
            <person name="Ishibashi T."/>
            <person name="Yamashita H."/>
            <person name="Murakawa K."/>
            <person name="Fujimori K."/>
            <person name="Tanai H."/>
            <person name="Kimata M."/>
            <person name="Watanabe M."/>
            <person name="Hiraoka S."/>
            <person name="Chiba Y."/>
            <person name="Ishida S."/>
            <person name="Ono Y."/>
            <person name="Takiguchi S."/>
            <person name="Watanabe S."/>
            <person name="Yosida M."/>
            <person name="Hotuta T."/>
            <person name="Kusano J."/>
            <person name="Kanehori K."/>
            <person name="Takahashi-Fujii A."/>
            <person name="Hara H."/>
            <person name="Tanase T.-O."/>
            <person name="Nomura Y."/>
            <person name="Togiya S."/>
            <person name="Komai F."/>
            <person name="Hara R."/>
            <person name="Takeuchi K."/>
            <person name="Arita M."/>
            <person name="Imose N."/>
            <person name="Musashino K."/>
            <person name="Yuuki H."/>
            <person name="Oshima A."/>
            <person name="Sasaki N."/>
            <person name="Aotsuka S."/>
            <person name="Yoshikawa Y."/>
            <person name="Matsunawa H."/>
            <person name="Ichihara T."/>
            <person name="Shiohata N."/>
            <person name="Sano S."/>
            <person name="Moriya S."/>
            <person name="Momiyama H."/>
            <person name="Satoh N."/>
            <person name="Takami S."/>
            <person name="Terashima Y."/>
            <person name="Suzuki O."/>
            <person name="Nakagawa S."/>
            <person name="Senoh A."/>
            <person name="Mizoguchi H."/>
            <person name="Goto Y."/>
            <person name="Shimizu F."/>
            <person name="Wakebe H."/>
            <person name="Hishigaki H."/>
            <person name="Watanabe T."/>
            <person name="Sugiyama A."/>
            <person name="Takemoto M."/>
            <person name="Kawakami B."/>
            <person name="Yamazaki M."/>
            <person name="Watanabe K."/>
            <person name="Kumagai A."/>
            <person name="Itakura S."/>
            <person name="Fukuzumi Y."/>
            <person name="Fujimori Y."/>
            <person name="Komiyama M."/>
            <person name="Tashiro H."/>
            <person name="Tanigami A."/>
            <person name="Fujiwara T."/>
            <person name="Ono T."/>
            <person name="Yamada K."/>
            <person name="Fujii Y."/>
            <person name="Ozaki K."/>
            <person name="Hirao M."/>
            <person name="Ohmori Y."/>
            <person name="Kawabata A."/>
            <person name="Hikiji T."/>
            <person name="Kobatake N."/>
            <person name="Inagaki H."/>
            <person name="Ikema Y."/>
            <person name="Okamoto S."/>
            <person name="Okitani R."/>
            <person name="Kawakami T."/>
            <person name="Noguchi S."/>
            <person name="Itoh T."/>
            <person name="Shigeta K."/>
            <person name="Senba T."/>
            <person name="Matsumura K."/>
            <person name="Nakajima Y."/>
            <person name="Mizuno T."/>
            <person name="Morinaga M."/>
            <person name="Sasaki M."/>
            <person name="Togashi T."/>
            <person name="Oyama M."/>
            <person name="Hata H."/>
            <person name="Watanabe M."/>
            <person name="Komatsu T."/>
            <person name="Mizushima-Sugano J."/>
            <person name="Satoh T."/>
            <person name="Shirai Y."/>
            <person name="Takahashi Y."/>
            <person name="Nakagawa K."/>
            <person name="Okumura K."/>
            <person name="Nagase T."/>
            <person name="Nomura N."/>
            <person name="Kikuchi H."/>
            <person name="Masuho Y."/>
            <person name="Yamashita R."/>
            <person name="Nakai K."/>
            <person name="Yada T."/>
            <person name="Nakamura Y."/>
            <person name="Ohara O."/>
            <person name="Isogai T."/>
            <person name="Sugano S."/>
        </authorList>
    </citation>
    <scope>NUCLEOTIDE SEQUENCE [LARGE SCALE MRNA] OF 1-696</scope>
    <scope>VARIANTS ARG-43 AND GLN-88</scope>
    <source>
        <tissue>Testis</tissue>
    </source>
</reference>
<reference key="3">
    <citation type="journal article" date="2007" name="BMC Genomics">
        <title>The full-ORF clone resource of the German cDNA consortium.</title>
        <authorList>
            <person name="Bechtel S."/>
            <person name="Rosenfelder H."/>
            <person name="Duda A."/>
            <person name="Schmidt C.P."/>
            <person name="Ernst U."/>
            <person name="Wellenreuther R."/>
            <person name="Mehrle A."/>
            <person name="Schuster C."/>
            <person name="Bahr A."/>
            <person name="Bloecker H."/>
            <person name="Heubner D."/>
            <person name="Hoerlein A."/>
            <person name="Michel G."/>
            <person name="Wedler H."/>
            <person name="Koehrer K."/>
            <person name="Ottenwaelder B."/>
            <person name="Poustka A."/>
            <person name="Wiemann S."/>
            <person name="Schupp I."/>
        </authorList>
    </citation>
    <scope>NUCLEOTIDE SEQUENCE [LARGE SCALE MRNA] OF 445-1692</scope>
    <source>
        <tissue>Testis</tissue>
    </source>
</reference>
<reference key="4">
    <citation type="journal article" date="2004" name="Genome Res.">
        <title>The status, quality, and expansion of the NIH full-length cDNA project: the Mammalian Gene Collection (MGC).</title>
        <authorList>
            <consortium name="The MGC Project Team"/>
        </authorList>
    </citation>
    <scope>NUCLEOTIDE SEQUENCE [LARGE SCALE MRNA] OF 1579-1692</scope>
</reference>
<dbReference type="EMBL" id="AC104187">
    <property type="status" value="NOT_ANNOTATED_CDS"/>
    <property type="molecule type" value="Genomic_DNA"/>
</dbReference>
<dbReference type="EMBL" id="AK093476">
    <property type="protein sequence ID" value="BAC04180.1"/>
    <property type="molecule type" value="mRNA"/>
</dbReference>
<dbReference type="EMBL" id="BX648094">
    <property type="status" value="NOT_ANNOTATED_CDS"/>
    <property type="molecule type" value="mRNA"/>
</dbReference>
<dbReference type="EMBL" id="AI208289">
    <property type="status" value="NOT_ANNOTATED_CDS"/>
    <property type="molecule type" value="mRNA"/>
</dbReference>
<dbReference type="CCDS" id="CCDS46809.1"/>
<dbReference type="RefSeq" id="NP_001138502.1">
    <property type="nucleotide sequence ID" value="NM_001145030.2"/>
</dbReference>
<dbReference type="BioGRID" id="131973">
    <property type="interactions" value="7"/>
</dbReference>
<dbReference type="FunCoup" id="Q8N9V7">
    <property type="interactions" value="49"/>
</dbReference>
<dbReference type="IntAct" id="Q8N9V7">
    <property type="interactions" value="1"/>
</dbReference>
<dbReference type="STRING" id="9606.ENSP00000310303"/>
<dbReference type="GlyGen" id="Q8N9V7">
    <property type="glycosylation" value="3 sites, 1 O-linked glycan (1 site)"/>
</dbReference>
<dbReference type="iPTMnet" id="Q8N9V7"/>
<dbReference type="PhosphoSitePlus" id="Q8N9V7"/>
<dbReference type="SwissPalm" id="Q8N9V7"/>
<dbReference type="BioMuta" id="TOPAZ1"/>
<dbReference type="DMDM" id="317373461"/>
<dbReference type="jPOST" id="Q8N9V7"/>
<dbReference type="MassIVE" id="Q8N9V7"/>
<dbReference type="PaxDb" id="9606-ENSP00000310303"/>
<dbReference type="PeptideAtlas" id="Q8N9V7"/>
<dbReference type="ProteomicsDB" id="72592"/>
<dbReference type="Antibodypedia" id="64655">
    <property type="antibodies" value="22 antibodies from 14 providers"/>
</dbReference>
<dbReference type="DNASU" id="375337"/>
<dbReference type="Ensembl" id="ENST00000309765.4">
    <property type="protein sequence ID" value="ENSP00000310303.4"/>
    <property type="gene ID" value="ENSG00000173769.4"/>
</dbReference>
<dbReference type="GeneID" id="375337"/>
<dbReference type="KEGG" id="hsa:375337"/>
<dbReference type="MANE-Select" id="ENST00000309765.4">
    <property type="protein sequence ID" value="ENSP00000310303.4"/>
    <property type="RefSeq nucleotide sequence ID" value="NM_001145030.2"/>
    <property type="RefSeq protein sequence ID" value="NP_001138502.1"/>
</dbReference>
<dbReference type="UCSC" id="uc003cna.4">
    <property type="organism name" value="human"/>
</dbReference>
<dbReference type="AGR" id="HGNC:24746"/>
<dbReference type="CTD" id="375337"/>
<dbReference type="DisGeNET" id="375337"/>
<dbReference type="GeneCards" id="TOPAZ1"/>
<dbReference type="HGNC" id="HGNC:24746">
    <property type="gene designation" value="TOPAZ1"/>
</dbReference>
<dbReference type="HPA" id="ENSG00000173769">
    <property type="expression patterns" value="Tissue enriched (testis)"/>
</dbReference>
<dbReference type="MIM" id="614412">
    <property type="type" value="gene"/>
</dbReference>
<dbReference type="neXtProt" id="NX_Q8N9V7"/>
<dbReference type="OpenTargets" id="ENSG00000173769"/>
<dbReference type="PharmGKB" id="PA165696874"/>
<dbReference type="VEuPathDB" id="HostDB:ENSG00000173769"/>
<dbReference type="eggNOG" id="ENOG502QPIV">
    <property type="taxonomic scope" value="Eukaryota"/>
</dbReference>
<dbReference type="GeneTree" id="ENSGT00390000012495"/>
<dbReference type="HOGENOM" id="CLU_003190_0_0_1"/>
<dbReference type="InParanoid" id="Q8N9V7"/>
<dbReference type="OMA" id="SPNEYHI"/>
<dbReference type="OrthoDB" id="8859650at2759"/>
<dbReference type="PAN-GO" id="Q8N9V7">
    <property type="GO annotations" value="2 GO annotations based on evolutionary models"/>
</dbReference>
<dbReference type="PhylomeDB" id="Q8N9V7"/>
<dbReference type="TreeFam" id="TF338635"/>
<dbReference type="PathwayCommons" id="Q8N9V7"/>
<dbReference type="SignaLink" id="Q8N9V7"/>
<dbReference type="BioGRID-ORCS" id="375337">
    <property type="hits" value="14 hits in 1144 CRISPR screens"/>
</dbReference>
<dbReference type="GenomeRNAi" id="375337"/>
<dbReference type="Pharos" id="Q8N9V7">
    <property type="development level" value="Tdark"/>
</dbReference>
<dbReference type="PRO" id="PR:Q8N9V7"/>
<dbReference type="Proteomes" id="UP000005640">
    <property type="component" value="Chromosome 3"/>
</dbReference>
<dbReference type="RNAct" id="Q8N9V7">
    <property type="molecule type" value="protein"/>
</dbReference>
<dbReference type="Bgee" id="ENSG00000173769">
    <property type="expression patterns" value="Expressed in male germ line stem cell (sensu Vertebrata) in testis and 3 other cell types or tissues"/>
</dbReference>
<dbReference type="GO" id="GO:0005829">
    <property type="term" value="C:cytosol"/>
    <property type="evidence" value="ECO:0007669"/>
    <property type="project" value="UniProtKB-SubCell"/>
</dbReference>
<dbReference type="GO" id="GO:0006915">
    <property type="term" value="P:apoptotic process"/>
    <property type="evidence" value="ECO:0007669"/>
    <property type="project" value="Ensembl"/>
</dbReference>
<dbReference type="GO" id="GO:0035234">
    <property type="term" value="P:ectopic germ cell programmed cell death"/>
    <property type="evidence" value="ECO:0007669"/>
    <property type="project" value="Ensembl"/>
</dbReference>
<dbReference type="GO" id="GO:0140742">
    <property type="term" value="P:lncRNA transcription"/>
    <property type="evidence" value="ECO:0007669"/>
    <property type="project" value="Ensembl"/>
</dbReference>
<dbReference type="GO" id="GO:0048137">
    <property type="term" value="P:spermatocyte division"/>
    <property type="evidence" value="ECO:0000318"/>
    <property type="project" value="GO_Central"/>
</dbReference>
<dbReference type="InterPro" id="IPR038952">
    <property type="entry name" value="TOPAZ1"/>
</dbReference>
<dbReference type="InterPro" id="IPR029435">
    <property type="entry name" value="TOPAZ1_dom"/>
</dbReference>
<dbReference type="PANTHER" id="PTHR35671">
    <property type="entry name" value="PROTEIN TOPAZ1"/>
    <property type="match status" value="1"/>
</dbReference>
<dbReference type="PANTHER" id="PTHR35671:SF1">
    <property type="entry name" value="PROTEIN TOPAZ1"/>
    <property type="match status" value="1"/>
</dbReference>
<dbReference type="Pfam" id="PF14669">
    <property type="entry name" value="Asp_Glu_race_2"/>
    <property type="match status" value="1"/>
</dbReference>
<feature type="chain" id="PRO_0000320600" description="Protein TOPAZ1">
    <location>
        <begin position="1"/>
        <end position="1692"/>
    </location>
</feature>
<feature type="region of interest" description="Disordered" evidence="2">
    <location>
        <begin position="1"/>
        <end position="135"/>
    </location>
</feature>
<feature type="region of interest" description="Disordered" evidence="2">
    <location>
        <begin position="600"/>
        <end position="629"/>
    </location>
</feature>
<feature type="region of interest" description="Disordered" evidence="2">
    <location>
        <begin position="894"/>
        <end position="919"/>
    </location>
</feature>
<feature type="compositionally biased region" description="Gly residues" evidence="2">
    <location>
        <begin position="31"/>
        <end position="40"/>
    </location>
</feature>
<feature type="compositionally biased region" description="Basic and acidic residues" evidence="2">
    <location>
        <begin position="95"/>
        <end position="116"/>
    </location>
</feature>
<feature type="compositionally biased region" description="Polar residues" evidence="2">
    <location>
        <begin position="608"/>
        <end position="627"/>
    </location>
</feature>
<feature type="compositionally biased region" description="Basic and acidic residues" evidence="2">
    <location>
        <begin position="902"/>
        <end position="919"/>
    </location>
</feature>
<feature type="sequence variant" id="VAR_039224" description="In dbSNP:rs9833423." evidence="3">
    <original>C</original>
    <variation>R</variation>
    <location>
        <position position="43"/>
    </location>
</feature>
<feature type="sequence variant" id="VAR_039225" description="In dbSNP:rs7645375." evidence="3">
    <original>P</original>
    <variation>Q</variation>
    <location>
        <position position="88"/>
    </location>
</feature>
<feature type="sequence variant" id="VAR_039226" description="In dbSNP:rs9284879.">
    <original>V</original>
    <variation>I</variation>
    <location>
        <position position="196"/>
    </location>
</feature>
<feature type="sequence variant" id="VAR_039227" description="In dbSNP:rs17076541.">
    <original>Q</original>
    <variation>R</variation>
    <location>
        <position position="483"/>
    </location>
</feature>
<feature type="sequence variant" id="VAR_039228" description="In dbSNP:rs17646517.">
    <original>P</original>
    <variation>A</variation>
    <location>
        <position position="673"/>
    </location>
</feature>
<feature type="sequence variant" id="VAR_039229" description="In dbSNP:rs17076545.">
    <original>K</original>
    <variation>E</variation>
    <location>
        <position position="796"/>
    </location>
</feature>
<feature type="sequence variant" id="VAR_039230" description="In dbSNP:rs11921568.">
    <original>Q</original>
    <variation>R</variation>
    <location>
        <position position="1352"/>
    </location>
</feature>
<feature type="sequence conflict" description="In Ref. 2; BAC04180." evidence="4" ref="2">
    <original>L</original>
    <variation>H</variation>
    <location>
        <position position="22"/>
    </location>
</feature>
<feature type="sequence conflict" description="In Ref. 3; BX648094." evidence="4" ref="3">
    <original>T</original>
    <variation>P</variation>
    <location>
        <position position="802"/>
    </location>
</feature>
<feature type="sequence conflict" description="In Ref. 3; BX648094." evidence="4" ref="3">
    <original>L</original>
    <variation>P</variation>
    <location>
        <position position="1537"/>
    </location>
</feature>
<feature type="sequence conflict" description="In Ref. 4; AI208289." evidence="4" ref="4">
    <original>S</original>
    <variation>I</variation>
    <location>
        <position position="1666"/>
    </location>
</feature>
<name>TOPZ1_HUMAN</name>
<comment type="function">
    <text evidence="1">Important for normal spermatogenesis and male fertility. Specifically required for progression to the post-meiotic stages of spermatocyte development. Seems to be necessary for normal expression levels of a number of testis-expressed gene transcripts, although its role in this process is unclear.</text>
</comment>
<comment type="subcellular location">
    <subcellularLocation>
        <location evidence="1">Cytoplasm</location>
        <location evidence="1">Cytosol</location>
    </subcellularLocation>
</comment>